<gene>
    <name evidence="1" type="primary">recF</name>
    <name type="ordered locus">BF0877</name>
</gene>
<comment type="function">
    <text evidence="1">The RecF protein is involved in DNA metabolism; it is required for DNA replication and normal SOS inducibility. RecF binds preferentially to single-stranded, linear DNA. It also seems to bind ATP.</text>
</comment>
<comment type="subcellular location">
    <subcellularLocation>
        <location evidence="1">Cytoplasm</location>
    </subcellularLocation>
</comment>
<comment type="similarity">
    <text evidence="1">Belongs to the RecF family.</text>
</comment>
<organism>
    <name type="scientific">Bacteroides fragilis (strain ATCC 25285 / DSM 2151 / CCUG 4856 / JCM 11019 / LMG 10263 / NCTC 9343 / Onslow / VPI 2553 / EN-2)</name>
    <dbReference type="NCBI Taxonomy" id="272559"/>
    <lineage>
        <taxon>Bacteria</taxon>
        <taxon>Pseudomonadati</taxon>
        <taxon>Bacteroidota</taxon>
        <taxon>Bacteroidia</taxon>
        <taxon>Bacteroidales</taxon>
        <taxon>Bacteroidaceae</taxon>
        <taxon>Bacteroides</taxon>
    </lineage>
</organism>
<protein>
    <recommendedName>
        <fullName evidence="1">DNA replication and repair protein RecF</fullName>
    </recommendedName>
</protein>
<reference key="1">
    <citation type="journal article" date="2005" name="Science">
        <title>Extensive DNA inversions in the B. fragilis genome control variable gene expression.</title>
        <authorList>
            <person name="Cerdeno-Tarraga A.-M."/>
            <person name="Patrick S."/>
            <person name="Crossman L.C."/>
            <person name="Blakely G."/>
            <person name="Abratt V."/>
            <person name="Lennard N."/>
            <person name="Poxton I."/>
            <person name="Duerden B."/>
            <person name="Harris B."/>
            <person name="Quail M.A."/>
            <person name="Barron A."/>
            <person name="Clark L."/>
            <person name="Corton C."/>
            <person name="Doggett J."/>
            <person name="Holden M.T.G."/>
            <person name="Larke N."/>
            <person name="Line A."/>
            <person name="Lord A."/>
            <person name="Norbertczak H."/>
            <person name="Ormond D."/>
            <person name="Price C."/>
            <person name="Rabbinowitsch E."/>
            <person name="Woodward J."/>
            <person name="Barrell B.G."/>
            <person name="Parkhill J."/>
        </authorList>
    </citation>
    <scope>NUCLEOTIDE SEQUENCE [LARGE SCALE GENOMIC DNA]</scope>
    <source>
        <strain>ATCC 25285 / DSM 2151 / CCUG 4856 / JCM 11019 / LMG 10263 / NCTC 9343 / Onslow / VPI 2553 / EN-2</strain>
    </source>
</reference>
<keyword id="KW-0067">ATP-binding</keyword>
<keyword id="KW-0963">Cytoplasm</keyword>
<keyword id="KW-0227">DNA damage</keyword>
<keyword id="KW-0234">DNA repair</keyword>
<keyword id="KW-0235">DNA replication</keyword>
<keyword id="KW-0238">DNA-binding</keyword>
<keyword id="KW-0547">Nucleotide-binding</keyword>
<keyword id="KW-0742">SOS response</keyword>
<dbReference type="EMBL" id="CR626927">
    <property type="protein sequence ID" value="CAH06620.1"/>
    <property type="molecule type" value="Genomic_DNA"/>
</dbReference>
<dbReference type="RefSeq" id="WP_010992232.1">
    <property type="nucleotide sequence ID" value="NC_003228.3"/>
</dbReference>
<dbReference type="SMR" id="Q5LGW6"/>
<dbReference type="PaxDb" id="272559-BF9343_0839"/>
<dbReference type="GeneID" id="60368527"/>
<dbReference type="KEGG" id="bfs:BF9343_0839"/>
<dbReference type="eggNOG" id="COG1195">
    <property type="taxonomic scope" value="Bacteria"/>
</dbReference>
<dbReference type="HOGENOM" id="CLU_040267_0_1_10"/>
<dbReference type="Proteomes" id="UP000006731">
    <property type="component" value="Chromosome"/>
</dbReference>
<dbReference type="GO" id="GO:0005737">
    <property type="term" value="C:cytoplasm"/>
    <property type="evidence" value="ECO:0007669"/>
    <property type="project" value="UniProtKB-SubCell"/>
</dbReference>
<dbReference type="GO" id="GO:0005524">
    <property type="term" value="F:ATP binding"/>
    <property type="evidence" value="ECO:0007669"/>
    <property type="project" value="UniProtKB-UniRule"/>
</dbReference>
<dbReference type="GO" id="GO:0003697">
    <property type="term" value="F:single-stranded DNA binding"/>
    <property type="evidence" value="ECO:0007669"/>
    <property type="project" value="UniProtKB-UniRule"/>
</dbReference>
<dbReference type="GO" id="GO:0006260">
    <property type="term" value="P:DNA replication"/>
    <property type="evidence" value="ECO:0007669"/>
    <property type="project" value="UniProtKB-UniRule"/>
</dbReference>
<dbReference type="GO" id="GO:0000731">
    <property type="term" value="P:DNA synthesis involved in DNA repair"/>
    <property type="evidence" value="ECO:0007669"/>
    <property type="project" value="TreeGrafter"/>
</dbReference>
<dbReference type="GO" id="GO:0006302">
    <property type="term" value="P:double-strand break repair"/>
    <property type="evidence" value="ECO:0007669"/>
    <property type="project" value="TreeGrafter"/>
</dbReference>
<dbReference type="GO" id="GO:0009432">
    <property type="term" value="P:SOS response"/>
    <property type="evidence" value="ECO:0007669"/>
    <property type="project" value="UniProtKB-UniRule"/>
</dbReference>
<dbReference type="FunFam" id="1.20.1050.90:FF:000005">
    <property type="entry name" value="DNA replication and repair protein RecF"/>
    <property type="match status" value="1"/>
</dbReference>
<dbReference type="Gene3D" id="3.40.50.300">
    <property type="entry name" value="P-loop containing nucleotide triphosphate hydrolases"/>
    <property type="match status" value="1"/>
</dbReference>
<dbReference type="Gene3D" id="1.20.1050.90">
    <property type="entry name" value="RecF/RecN/SMC, N-terminal domain"/>
    <property type="match status" value="1"/>
</dbReference>
<dbReference type="HAMAP" id="MF_00365">
    <property type="entry name" value="RecF"/>
    <property type="match status" value="1"/>
</dbReference>
<dbReference type="InterPro" id="IPR001238">
    <property type="entry name" value="DNA-binding_RecF"/>
</dbReference>
<dbReference type="InterPro" id="IPR018078">
    <property type="entry name" value="DNA-binding_RecF_CS"/>
</dbReference>
<dbReference type="InterPro" id="IPR027417">
    <property type="entry name" value="P-loop_NTPase"/>
</dbReference>
<dbReference type="InterPro" id="IPR003395">
    <property type="entry name" value="RecF/RecN/SMC_N"/>
</dbReference>
<dbReference type="InterPro" id="IPR042174">
    <property type="entry name" value="RecF_2"/>
</dbReference>
<dbReference type="NCBIfam" id="TIGR00611">
    <property type="entry name" value="recf"/>
    <property type="match status" value="1"/>
</dbReference>
<dbReference type="PANTHER" id="PTHR32182">
    <property type="entry name" value="DNA REPLICATION AND REPAIR PROTEIN RECF"/>
    <property type="match status" value="1"/>
</dbReference>
<dbReference type="PANTHER" id="PTHR32182:SF0">
    <property type="entry name" value="DNA REPLICATION AND REPAIR PROTEIN RECF"/>
    <property type="match status" value="1"/>
</dbReference>
<dbReference type="Pfam" id="PF02463">
    <property type="entry name" value="SMC_N"/>
    <property type="match status" value="1"/>
</dbReference>
<dbReference type="SUPFAM" id="SSF52540">
    <property type="entry name" value="P-loop containing nucleoside triphosphate hydrolases"/>
    <property type="match status" value="1"/>
</dbReference>
<dbReference type="PROSITE" id="PS00617">
    <property type="entry name" value="RECF_1"/>
    <property type="match status" value="1"/>
</dbReference>
<dbReference type="PROSITE" id="PS00618">
    <property type="entry name" value="RECF_2"/>
    <property type="match status" value="1"/>
</dbReference>
<evidence type="ECO:0000255" key="1">
    <source>
        <dbReference type="HAMAP-Rule" id="MF_00365"/>
    </source>
</evidence>
<feature type="chain" id="PRO_0000236111" description="DNA replication and repair protein RecF">
    <location>
        <begin position="1"/>
        <end position="370"/>
    </location>
</feature>
<feature type="binding site" evidence="1">
    <location>
        <begin position="30"/>
        <end position="37"/>
    </location>
    <ligand>
        <name>ATP</name>
        <dbReference type="ChEBI" id="CHEBI:30616"/>
    </ligand>
</feature>
<name>RECF_BACFN</name>
<accession>Q5LGW6</accession>
<sequence>MILKRISILNYKNLEQVELNFSAKLNCFFGQNGMGKTNLLDAVYFLSFCKSAGNPIDSQNIRHEQDFFVIQGFYEAMDGTPEEIYCGMKRRSKKQFKRNKKEYSRLSDHIGFIPLVMVSPADSELIAGGSDERRRFMDVVISQYDKEYLDALIRYNKALVQRNTLLKSEQPIEEELFLVWEEMMAQAGEVVFRKREAFISEFIPIFQSFYSYISQDKEQVGLTYESHARKASLLEVLKESRVRDKIMGYSLRGIHKDELNMLLGDFPIKREGSQGQNKTYLVALKLAQFDFLKRTGSTVPLLLLDDIFDKLDASRVEQIVKLVAGDNFGQIFITDTNREHLDRILYKVGSDYKMFRVESGAINEMEEKER</sequence>
<proteinExistence type="inferred from homology"/>